<sequence>MDNTLIDPRIIGKHVYGNLYEIPEEIAGDEEYLRNVVVEAAKLANMTLLEVKSWKLGGEKGGVSVIALVLESHIAIHTWINYRYATVDVYTCGEKSDPWRAFNYIVEKLKPKEYTVNYADRTQLLKQ</sequence>
<evidence type="ECO:0000255" key="1">
    <source>
        <dbReference type="HAMAP-Rule" id="MF_01298"/>
    </source>
</evidence>
<name>ARGDC_STAMF</name>
<gene>
    <name type="ordered locus">Smar_0500</name>
</gene>
<dbReference type="EC" id="4.1.1.19" evidence="1"/>
<dbReference type="EMBL" id="CP000575">
    <property type="protein sequence ID" value="ABN69608.1"/>
    <property type="molecule type" value="Genomic_DNA"/>
</dbReference>
<dbReference type="RefSeq" id="WP_011838799.1">
    <property type="nucleotide sequence ID" value="NC_009033.1"/>
</dbReference>
<dbReference type="SMR" id="A3DLU8"/>
<dbReference type="STRING" id="399550.Smar_0500"/>
<dbReference type="GeneID" id="4907823"/>
<dbReference type="KEGG" id="smr:Smar_0500"/>
<dbReference type="eggNOG" id="arCOG00279">
    <property type="taxonomic scope" value="Archaea"/>
</dbReference>
<dbReference type="HOGENOM" id="CLU_125470_2_1_2"/>
<dbReference type="OrthoDB" id="114016at2157"/>
<dbReference type="UniPathway" id="UPA00186">
    <property type="reaction ID" value="UER00284"/>
</dbReference>
<dbReference type="Proteomes" id="UP000000254">
    <property type="component" value="Chromosome"/>
</dbReference>
<dbReference type="GO" id="GO:0005829">
    <property type="term" value="C:cytosol"/>
    <property type="evidence" value="ECO:0007669"/>
    <property type="project" value="TreeGrafter"/>
</dbReference>
<dbReference type="GO" id="GO:0008792">
    <property type="term" value="F:arginine decarboxylase activity"/>
    <property type="evidence" value="ECO:0007669"/>
    <property type="project" value="UniProtKB-UniRule"/>
</dbReference>
<dbReference type="GO" id="GO:0006527">
    <property type="term" value="P:arginine catabolic process"/>
    <property type="evidence" value="ECO:0007669"/>
    <property type="project" value="UniProtKB-UniRule"/>
</dbReference>
<dbReference type="GO" id="GO:0006596">
    <property type="term" value="P:polyamine biosynthetic process"/>
    <property type="evidence" value="ECO:0007669"/>
    <property type="project" value="UniProtKB-UniRule"/>
</dbReference>
<dbReference type="Gene3D" id="3.60.90.10">
    <property type="entry name" value="S-adenosylmethionine decarboxylase"/>
    <property type="match status" value="1"/>
</dbReference>
<dbReference type="HAMAP" id="MF_00464">
    <property type="entry name" value="AdoMetDC_1"/>
    <property type="match status" value="1"/>
</dbReference>
<dbReference type="HAMAP" id="MF_01298">
    <property type="entry name" value="ArgDC"/>
    <property type="match status" value="1"/>
</dbReference>
<dbReference type="InterPro" id="IPR003826">
    <property type="entry name" value="AdoMetDC_fam_prok"/>
</dbReference>
<dbReference type="InterPro" id="IPR027549">
    <property type="entry name" value="ArgDC"/>
</dbReference>
<dbReference type="InterPro" id="IPR016067">
    <property type="entry name" value="S-AdoMet_deCO2ase_core"/>
</dbReference>
<dbReference type="InterPro" id="IPR017716">
    <property type="entry name" value="S-AdoMet_deCOase_pro-enz"/>
</dbReference>
<dbReference type="NCBIfam" id="TIGR03330">
    <property type="entry name" value="SAM_DCase_Bsu"/>
    <property type="match status" value="1"/>
</dbReference>
<dbReference type="PANTHER" id="PTHR33866">
    <property type="entry name" value="S-ADENOSYLMETHIONINE DECARBOXYLASE PROENZYME"/>
    <property type="match status" value="1"/>
</dbReference>
<dbReference type="PANTHER" id="PTHR33866:SF2">
    <property type="entry name" value="S-ADENOSYLMETHIONINE DECARBOXYLASE PROENZYME"/>
    <property type="match status" value="1"/>
</dbReference>
<dbReference type="Pfam" id="PF02675">
    <property type="entry name" value="AdoMet_dc"/>
    <property type="match status" value="1"/>
</dbReference>
<dbReference type="SUPFAM" id="SSF56276">
    <property type="entry name" value="S-adenosylmethionine decarboxylase"/>
    <property type="match status" value="1"/>
</dbReference>
<organism>
    <name type="scientific">Staphylothermus marinus (strain ATCC 43588 / DSM 3639 / JCM 9404 / F1)</name>
    <dbReference type="NCBI Taxonomy" id="399550"/>
    <lineage>
        <taxon>Archaea</taxon>
        <taxon>Thermoproteota</taxon>
        <taxon>Thermoprotei</taxon>
        <taxon>Desulfurococcales</taxon>
        <taxon>Desulfurococcaceae</taxon>
        <taxon>Staphylothermus</taxon>
    </lineage>
</organism>
<accession>A3DLU8</accession>
<comment type="function">
    <text evidence="1">Specifically catalyzes the decarboxylation of L-arginine to agmatine. Has no S-adenosylmethionine decarboxylase (AdoMetDC) activity.</text>
</comment>
<comment type="catalytic activity">
    <reaction evidence="1">
        <text>L-arginine + H(+) = agmatine + CO2</text>
        <dbReference type="Rhea" id="RHEA:17641"/>
        <dbReference type="ChEBI" id="CHEBI:15378"/>
        <dbReference type="ChEBI" id="CHEBI:16526"/>
        <dbReference type="ChEBI" id="CHEBI:32682"/>
        <dbReference type="ChEBI" id="CHEBI:58145"/>
        <dbReference type="EC" id="4.1.1.19"/>
    </reaction>
</comment>
<comment type="cofactor">
    <cofactor evidence="1">
        <name>pyruvate</name>
        <dbReference type="ChEBI" id="CHEBI:15361"/>
    </cofactor>
    <text evidence="1">Binds 1 pyruvoyl group covalently per subunit.</text>
</comment>
<comment type="pathway">
    <text evidence="1">Amine and polyamine biosynthesis; agmatine biosynthesis; agmatine from L-arginine: step 1/1.</text>
</comment>
<comment type="subunit">
    <text evidence="1">Heterooctamer of four alpha and four beta chains arranged as a tetramer of alpha/beta heterodimers.</text>
</comment>
<comment type="PTM">
    <text evidence="1">Is synthesized initially as an inactive proenzyme. Formation of the active enzyme involves a self-maturation process in which the active site pyruvoyl group is generated from an internal serine residue via an autocatalytic post-translational modification. Two non-identical subunits are generated from the proenzyme in this reaction, and the pyruvate is formed at the N-terminus of the alpha chain, which is derived from the carboxyl end of the proenzyme. The post-translation cleavage follows an unusual pathway, termed non-hydrolytic serinolysis, in which the side chain hydroxyl group of the serine supplies its oxygen atom to form the C-terminus of the beta chain, while the remainder of the serine residue undergoes an oxidative deamination to produce ammonia and the pyruvoyl group blocking the N-terminus of the alpha chain.</text>
</comment>
<comment type="similarity">
    <text evidence="1">Belongs to the prokaryotic AdoMetDC family. Type 1 subfamily.</text>
</comment>
<feature type="chain" id="PRO_0000364125" description="Arginine decarboxylase beta chain" evidence="1">
    <location>
        <begin position="1"/>
        <end position="71"/>
    </location>
</feature>
<feature type="chain" id="PRO_0000364126" description="Arginine decarboxylase alpha chain" evidence="1">
    <location>
        <begin position="72"/>
        <end position="127"/>
    </location>
</feature>
<feature type="active site" description="Schiff-base intermediate with substrate; via pyruvic acid" evidence="1">
    <location>
        <position position="72"/>
    </location>
</feature>
<feature type="active site" description="Proton acceptor; for processing activity" evidence="1">
    <location>
        <position position="77"/>
    </location>
</feature>
<feature type="active site" description="Proton donor; for catalytic activity" evidence="1">
    <location>
        <position position="92"/>
    </location>
</feature>
<feature type="site" description="Cleavage (non-hydrolytic); by autolysis" evidence="1">
    <location>
        <begin position="71"/>
        <end position="72"/>
    </location>
</feature>
<feature type="modified residue" description="Pyruvic acid (Ser); by autocatalysis" evidence="1">
    <location>
        <position position="72"/>
    </location>
</feature>
<protein>
    <recommendedName>
        <fullName evidence="1">Arginine decarboxylase proenzyme</fullName>
        <shortName evidence="1">ADC</shortName>
        <shortName evidence="1">ArgDC</shortName>
        <ecNumber evidence="1">4.1.1.19</ecNumber>
    </recommendedName>
    <alternativeName>
        <fullName evidence="1">Pyruvoyl-dependent arginine decarboxylase</fullName>
    </alternativeName>
    <component>
        <recommendedName>
            <fullName evidence="1">Arginine decarboxylase beta chain</fullName>
        </recommendedName>
    </component>
    <component>
        <recommendedName>
            <fullName evidence="1">Arginine decarboxylase alpha chain</fullName>
        </recommendedName>
    </component>
</protein>
<proteinExistence type="inferred from homology"/>
<reference key="1">
    <citation type="journal article" date="2009" name="BMC Genomics">
        <title>The complete genome sequence of Staphylothermus marinus reveals differences in sulfur metabolism among heterotrophic Crenarchaeota.</title>
        <authorList>
            <person name="Anderson I.J."/>
            <person name="Dharmarajan L."/>
            <person name="Rodriguez J."/>
            <person name="Hooper S."/>
            <person name="Porat I."/>
            <person name="Ulrich L.E."/>
            <person name="Elkins J.G."/>
            <person name="Mavromatis K."/>
            <person name="Sun H."/>
            <person name="Land M."/>
            <person name="Lapidus A."/>
            <person name="Lucas S."/>
            <person name="Barry K."/>
            <person name="Huber H."/>
            <person name="Zhulin I.B."/>
            <person name="Whitman W.B."/>
            <person name="Mukhopadhyay B."/>
            <person name="Woese C."/>
            <person name="Bristow J."/>
            <person name="Kyrpides N."/>
        </authorList>
    </citation>
    <scope>NUCLEOTIDE SEQUENCE [LARGE SCALE GENOMIC DNA]</scope>
    <source>
        <strain>ATCC 43588 / DSM 3639 / JCM 9404 / F1</strain>
    </source>
</reference>
<reference key="2">
    <citation type="journal article" date="2009" name="Stand. Genomic Sci.">
        <title>Complete genome sequence of Staphylothermus marinus Stetter and Fiala 1986 type strain F1.</title>
        <authorList>
            <person name="Anderson I.J."/>
            <person name="Sun H."/>
            <person name="Lapidus A."/>
            <person name="Copeland A."/>
            <person name="Glavina Del Rio T."/>
            <person name="Tice H."/>
            <person name="Dalin E."/>
            <person name="Lucas S."/>
            <person name="Barry K."/>
            <person name="Land M."/>
            <person name="Richardson P."/>
            <person name="Huber H."/>
            <person name="Kyrpides N.C."/>
        </authorList>
    </citation>
    <scope>NUCLEOTIDE SEQUENCE [LARGE SCALE GENOMIC DNA]</scope>
    <source>
        <strain>ATCC 43588 / DSM 3639 / JCM 9404 / F1</strain>
    </source>
</reference>
<keyword id="KW-0068">Autocatalytic cleavage</keyword>
<keyword id="KW-0210">Decarboxylase</keyword>
<keyword id="KW-0456">Lyase</keyword>
<keyword id="KW-0620">Polyamine biosynthesis</keyword>
<keyword id="KW-0670">Pyruvate</keyword>
<keyword id="KW-1185">Reference proteome</keyword>
<keyword id="KW-0704">Schiff base</keyword>
<keyword id="KW-0865">Zymogen</keyword>